<protein>
    <recommendedName>
        <fullName>Probable endonuclease lcl3</fullName>
        <ecNumber>3.1.-.-</ecNumber>
    </recommendedName>
</protein>
<feature type="chain" id="PRO_0000408673" description="Probable endonuclease lcl3">
    <location>
        <begin position="1"/>
        <end position="292"/>
    </location>
</feature>
<feature type="transmembrane region" description="Helical" evidence="2">
    <location>
        <begin position="45"/>
        <end position="61"/>
    </location>
</feature>
<feature type="domain" description="TNase-like" evidence="3">
    <location>
        <begin position="83"/>
        <end position="250"/>
    </location>
</feature>
<feature type="region of interest" description="Disordered" evidence="4">
    <location>
        <begin position="1"/>
        <end position="27"/>
    </location>
</feature>
<feature type="region of interest" description="Disordered" evidence="4">
    <location>
        <begin position="257"/>
        <end position="292"/>
    </location>
</feature>
<feature type="compositionally biased region" description="Polar residues" evidence="4">
    <location>
        <begin position="17"/>
        <end position="27"/>
    </location>
</feature>
<feature type="compositionally biased region" description="Gly residues" evidence="4">
    <location>
        <begin position="281"/>
        <end position="292"/>
    </location>
</feature>
<feature type="active site" evidence="3">
    <location>
        <position position="134"/>
    </location>
</feature>
<feature type="active site" evidence="3">
    <location>
        <position position="142"/>
    </location>
</feature>
<feature type="active site" evidence="3">
    <location>
        <position position="182"/>
    </location>
</feature>
<feature type="binding site" evidence="3">
    <location>
        <position position="139"/>
    </location>
    <ligand>
        <name>Ca(2+)</name>
        <dbReference type="ChEBI" id="CHEBI:29108"/>
    </ligand>
</feature>
<proteinExistence type="inferred from homology"/>
<sequence>MRWPPWSSESTNDEQKQTPSSWLSSAANKPSSILDWTAFTELRTIIPTVVLTSGILIAVRFHRRYLRRIPDAPSISSSYLRRRSIFGQVTSVGDGDNFRIFHTPGGRMAGWGWLPWKKVPTVKKDLKDKTIHIRLAGVDAPELAHFGRPEQPFARDAHTWLTSYLSNRRVRALVHRQDQYSRVVASVFVRRAFDFPPFRRRDVSYEMLKRGLATVYEAKIGSEFGGDKMEKKYRKAEWWAKKRARGLWKDYRRVGSGWESPREYKNRMGMGDPLPIEKGNGKGNGKGKIGQK</sequence>
<evidence type="ECO:0000250" key="1"/>
<evidence type="ECO:0000255" key="2"/>
<evidence type="ECO:0000255" key="3">
    <source>
        <dbReference type="PROSITE-ProRule" id="PRU00272"/>
    </source>
</evidence>
<evidence type="ECO:0000256" key="4">
    <source>
        <dbReference type="SAM" id="MobiDB-lite"/>
    </source>
</evidence>
<evidence type="ECO:0000305" key="5"/>
<reference key="1">
    <citation type="journal article" date="2008" name="Nat. Biotechnol.">
        <title>Genome sequencing and analysis of the filamentous fungus Penicillium chrysogenum.</title>
        <authorList>
            <person name="van den Berg M.A."/>
            <person name="Albang R."/>
            <person name="Albermann K."/>
            <person name="Badger J.H."/>
            <person name="Daran J.-M."/>
            <person name="Driessen A.J.M."/>
            <person name="Garcia-Estrada C."/>
            <person name="Fedorova N.D."/>
            <person name="Harris D.M."/>
            <person name="Heijne W.H.M."/>
            <person name="Joardar V.S."/>
            <person name="Kiel J.A.K.W."/>
            <person name="Kovalchuk A."/>
            <person name="Martin J.F."/>
            <person name="Nierman W.C."/>
            <person name="Nijland J.G."/>
            <person name="Pronk J.T."/>
            <person name="Roubos J.A."/>
            <person name="van der Klei I.J."/>
            <person name="van Peij N.N.M.E."/>
            <person name="Veenhuis M."/>
            <person name="von Doehren H."/>
            <person name="Wagner C."/>
            <person name="Wortman J.R."/>
            <person name="Bovenberg R.A.L."/>
        </authorList>
    </citation>
    <scope>NUCLEOTIDE SEQUENCE [LARGE SCALE GENOMIC DNA]</scope>
    <source>
        <strain>ATCC 28089 / DSM 1075 / NRRL 1951 / Wisconsin 54-1255</strain>
    </source>
</reference>
<keyword id="KW-0106">Calcium</keyword>
<keyword id="KW-0255">Endonuclease</keyword>
<keyword id="KW-0378">Hydrolase</keyword>
<keyword id="KW-0472">Membrane</keyword>
<keyword id="KW-0479">Metal-binding</keyword>
<keyword id="KW-0496">Mitochondrion</keyword>
<keyword id="KW-0540">Nuclease</keyword>
<keyword id="KW-1185">Reference proteome</keyword>
<keyword id="KW-0812">Transmembrane</keyword>
<keyword id="KW-1133">Transmembrane helix</keyword>
<name>LCL3_PENRW</name>
<gene>
    <name type="primary">lcl3</name>
    <name type="ORF">Pc13g03230</name>
</gene>
<comment type="subcellular location">
    <subcellularLocation>
        <location>Mitochondrion</location>
    </subcellularLocation>
    <subcellularLocation>
        <location evidence="1">Membrane</location>
        <topology evidence="1">Single-pass membrane protein</topology>
    </subcellularLocation>
</comment>
<comment type="similarity">
    <text evidence="5">Belongs to the LCL3 family.</text>
</comment>
<dbReference type="EC" id="3.1.-.-"/>
<dbReference type="EMBL" id="AM920428">
    <property type="protein sequence ID" value="CAP91392.1"/>
    <property type="molecule type" value="Genomic_DNA"/>
</dbReference>
<dbReference type="RefSeq" id="XP_002558761.1">
    <property type="nucleotide sequence ID" value="XM_002558715.1"/>
</dbReference>
<dbReference type="GeneID" id="8313423"/>
<dbReference type="KEGG" id="pcs:N7525_003827"/>
<dbReference type="VEuPathDB" id="FungiDB:PCH_Pc13g03230"/>
<dbReference type="eggNOG" id="ENOG502RZZQ">
    <property type="taxonomic scope" value="Eukaryota"/>
</dbReference>
<dbReference type="HOGENOM" id="CLU_046484_0_1_1"/>
<dbReference type="OMA" id="IYHTPGG"/>
<dbReference type="OrthoDB" id="430293at2759"/>
<dbReference type="BioCyc" id="PCHR:PC13G03230-MONOMER"/>
<dbReference type="Proteomes" id="UP000000724">
    <property type="component" value="Contig Pc00c13"/>
</dbReference>
<dbReference type="GO" id="GO:0016020">
    <property type="term" value="C:membrane"/>
    <property type="evidence" value="ECO:0007669"/>
    <property type="project" value="UniProtKB-SubCell"/>
</dbReference>
<dbReference type="GO" id="GO:0005739">
    <property type="term" value="C:mitochondrion"/>
    <property type="evidence" value="ECO:0007669"/>
    <property type="project" value="UniProtKB-SubCell"/>
</dbReference>
<dbReference type="GO" id="GO:0004519">
    <property type="term" value="F:endonuclease activity"/>
    <property type="evidence" value="ECO:0007669"/>
    <property type="project" value="UniProtKB-KW"/>
</dbReference>
<dbReference type="GO" id="GO:0046872">
    <property type="term" value="F:metal ion binding"/>
    <property type="evidence" value="ECO:0007669"/>
    <property type="project" value="UniProtKB-KW"/>
</dbReference>
<dbReference type="FunFam" id="2.40.50.90:FF:000029">
    <property type="entry name" value="Probable endonuclease lcl3"/>
    <property type="match status" value="1"/>
</dbReference>
<dbReference type="Gene3D" id="2.40.50.90">
    <property type="match status" value="1"/>
</dbReference>
<dbReference type="InterPro" id="IPR035437">
    <property type="entry name" value="SNase_OB-fold_sf"/>
</dbReference>
<dbReference type="InterPro" id="IPR016071">
    <property type="entry name" value="Staphylococal_nuclease_OB-fold"/>
</dbReference>
<dbReference type="PANTHER" id="PTHR12302">
    <property type="entry name" value="EBNA2 BINDING PROTEIN P100"/>
    <property type="match status" value="1"/>
</dbReference>
<dbReference type="PANTHER" id="PTHR12302:SF3">
    <property type="entry name" value="SERINE_THREONINE-PROTEIN KINASE 31"/>
    <property type="match status" value="1"/>
</dbReference>
<dbReference type="Pfam" id="PF00565">
    <property type="entry name" value="SNase"/>
    <property type="match status" value="1"/>
</dbReference>
<dbReference type="SMART" id="SM00318">
    <property type="entry name" value="SNc"/>
    <property type="match status" value="1"/>
</dbReference>
<dbReference type="SUPFAM" id="SSF50199">
    <property type="entry name" value="Staphylococcal nuclease"/>
    <property type="match status" value="1"/>
</dbReference>
<dbReference type="PROSITE" id="PS50830">
    <property type="entry name" value="TNASE_3"/>
    <property type="match status" value="1"/>
</dbReference>
<organism>
    <name type="scientific">Penicillium rubens (strain ATCC 28089 / DSM 1075 / NRRL 1951 / Wisconsin 54-1255)</name>
    <name type="common">Penicillium chrysogenum</name>
    <dbReference type="NCBI Taxonomy" id="500485"/>
    <lineage>
        <taxon>Eukaryota</taxon>
        <taxon>Fungi</taxon>
        <taxon>Dikarya</taxon>
        <taxon>Ascomycota</taxon>
        <taxon>Pezizomycotina</taxon>
        <taxon>Eurotiomycetes</taxon>
        <taxon>Eurotiomycetidae</taxon>
        <taxon>Eurotiales</taxon>
        <taxon>Aspergillaceae</taxon>
        <taxon>Penicillium</taxon>
        <taxon>Penicillium chrysogenum species complex</taxon>
    </lineage>
</organism>
<accession>B6H1W0</accession>